<name>E2F8_BOVIN</name>
<dbReference type="EMBL" id="DAAA02062974">
    <property type="status" value="NOT_ANNOTATED_CDS"/>
    <property type="molecule type" value="Genomic_DNA"/>
</dbReference>
<dbReference type="RefSeq" id="NP_001178163.1">
    <property type="nucleotide sequence ID" value="NM_001191234.3"/>
</dbReference>
<dbReference type="SMR" id="E1BKK0"/>
<dbReference type="FunCoup" id="E1BKK0">
    <property type="interactions" value="172"/>
</dbReference>
<dbReference type="STRING" id="9913.ENSBTAP00000063720"/>
<dbReference type="PaxDb" id="9913-ENSBTAP00000023190"/>
<dbReference type="GeneID" id="786629"/>
<dbReference type="KEGG" id="bta:786629"/>
<dbReference type="CTD" id="79733"/>
<dbReference type="eggNOG" id="KOG2578">
    <property type="taxonomic scope" value="Eukaryota"/>
</dbReference>
<dbReference type="HOGENOM" id="CLU_014845_2_0_1"/>
<dbReference type="InParanoid" id="E1BKK0"/>
<dbReference type="OrthoDB" id="5318at2759"/>
<dbReference type="TreeFam" id="TF105567"/>
<dbReference type="Proteomes" id="UP000009136">
    <property type="component" value="Unplaced"/>
</dbReference>
<dbReference type="GO" id="GO:0090575">
    <property type="term" value="C:RNA polymerase II transcription regulator complex"/>
    <property type="evidence" value="ECO:0000318"/>
    <property type="project" value="GO_Central"/>
</dbReference>
<dbReference type="GO" id="GO:0003700">
    <property type="term" value="F:DNA-binding transcription factor activity"/>
    <property type="evidence" value="ECO:0000250"/>
    <property type="project" value="UniProtKB"/>
</dbReference>
<dbReference type="GO" id="GO:0000981">
    <property type="term" value="F:DNA-binding transcription factor activity, RNA polymerase II-specific"/>
    <property type="evidence" value="ECO:0000318"/>
    <property type="project" value="GO_Central"/>
</dbReference>
<dbReference type="GO" id="GO:0001217">
    <property type="term" value="F:DNA-binding transcription repressor activity"/>
    <property type="evidence" value="ECO:0000250"/>
    <property type="project" value="UniProtKB"/>
</dbReference>
<dbReference type="GO" id="GO:0000978">
    <property type="term" value="F:RNA polymerase II cis-regulatory region sequence-specific DNA binding"/>
    <property type="evidence" value="ECO:0000318"/>
    <property type="project" value="GO_Central"/>
</dbReference>
<dbReference type="GO" id="GO:0033301">
    <property type="term" value="P:cell cycle comprising mitosis without cytokinesis"/>
    <property type="evidence" value="ECO:0000250"/>
    <property type="project" value="UniProtKB"/>
</dbReference>
<dbReference type="GO" id="GO:0060718">
    <property type="term" value="P:chorionic trophoblast cell differentiation"/>
    <property type="evidence" value="ECO:0000250"/>
    <property type="project" value="UniProtKB"/>
</dbReference>
<dbReference type="GO" id="GO:0070365">
    <property type="term" value="P:hepatocyte differentiation"/>
    <property type="evidence" value="ECO:0000250"/>
    <property type="project" value="UniProtKB"/>
</dbReference>
<dbReference type="GO" id="GO:0032466">
    <property type="term" value="P:negative regulation of cytokinesis"/>
    <property type="evidence" value="ECO:0000250"/>
    <property type="project" value="UniProtKB"/>
</dbReference>
<dbReference type="GO" id="GO:0000122">
    <property type="term" value="P:negative regulation of transcription by RNA polymerase II"/>
    <property type="evidence" value="ECO:0000250"/>
    <property type="project" value="UniProtKB"/>
</dbReference>
<dbReference type="GO" id="GO:0001890">
    <property type="term" value="P:placenta development"/>
    <property type="evidence" value="ECO:0000250"/>
    <property type="project" value="UniProtKB"/>
</dbReference>
<dbReference type="GO" id="GO:0032877">
    <property type="term" value="P:positive regulation of DNA endoreduplication"/>
    <property type="evidence" value="ECO:0000250"/>
    <property type="project" value="UniProtKB"/>
</dbReference>
<dbReference type="GO" id="GO:0006357">
    <property type="term" value="P:regulation of transcription by RNA polymerase II"/>
    <property type="evidence" value="ECO:0000318"/>
    <property type="project" value="GO_Central"/>
</dbReference>
<dbReference type="GO" id="GO:0002040">
    <property type="term" value="P:sprouting angiogenesis"/>
    <property type="evidence" value="ECO:0000250"/>
    <property type="project" value="UniProtKB"/>
</dbReference>
<dbReference type="GO" id="GO:0060707">
    <property type="term" value="P:trophoblast giant cell differentiation"/>
    <property type="evidence" value="ECO:0000250"/>
    <property type="project" value="UniProtKB"/>
</dbReference>
<dbReference type="FunFam" id="1.10.10.10:FF:000073">
    <property type="entry name" value="E2F transcription factor 8"/>
    <property type="match status" value="1"/>
</dbReference>
<dbReference type="FunFam" id="1.10.10.10:FF:000100">
    <property type="entry name" value="E2F transcription factor 8"/>
    <property type="match status" value="1"/>
</dbReference>
<dbReference type="Gene3D" id="1.10.10.10">
    <property type="entry name" value="Winged helix-like DNA-binding domain superfamily/Winged helix DNA-binding domain"/>
    <property type="match status" value="2"/>
</dbReference>
<dbReference type="InterPro" id="IPR015633">
    <property type="entry name" value="E2F"/>
</dbReference>
<dbReference type="InterPro" id="IPR003316">
    <property type="entry name" value="E2F_WHTH_DNA-bd_dom"/>
</dbReference>
<dbReference type="InterPro" id="IPR036388">
    <property type="entry name" value="WH-like_DNA-bd_sf"/>
</dbReference>
<dbReference type="InterPro" id="IPR036390">
    <property type="entry name" value="WH_DNA-bd_sf"/>
</dbReference>
<dbReference type="PANTHER" id="PTHR12081">
    <property type="entry name" value="TRANSCRIPTION FACTOR E2F"/>
    <property type="match status" value="1"/>
</dbReference>
<dbReference type="PANTHER" id="PTHR12081:SF40">
    <property type="entry name" value="TRANSCRIPTION FACTOR E2F8"/>
    <property type="match status" value="1"/>
</dbReference>
<dbReference type="Pfam" id="PF02319">
    <property type="entry name" value="E2F_TDP"/>
    <property type="match status" value="2"/>
</dbReference>
<dbReference type="SMART" id="SM01372">
    <property type="entry name" value="E2F_TDP"/>
    <property type="match status" value="2"/>
</dbReference>
<dbReference type="SUPFAM" id="SSF46785">
    <property type="entry name" value="Winged helix' DNA-binding domain"/>
    <property type="match status" value="2"/>
</dbReference>
<comment type="function">
    <text evidence="1">Atypical E2F transcription factor that participates in various processes such as angiogenesis and polyploidization of specialized cells. Mainly acts as a transcription repressor that binds DNA independently of DP proteins and specifically recognizes the E2 recognition site 5'-TTTC[CG]CGC-3'. Directly represses transcription of classical E2F transcription factors such as E2F1: component of a feedback loop in S phase by repressing the expression of E2F1, thereby preventing p53/TP53-dependent apoptosis. Plays a key role in polyploidization of cells in placenta and liver by regulating the endocycle, probably by repressing genes promoting cytokinesis and antagonizing action of classical E2F proteins (E2F1, E2F2 and/or E2F3). Required for placental development by promoting polyploidization of trophoblast giant cells. Acts as a promoter of sprouting angiogenesis, possibly by acting as a transcription activator: associates with HIF1A, recognizes and binds the VEGFA promoter, which is different from canonical E2 recognition site, and activates expression of the VEGFA gene (By similarity).</text>
</comment>
<comment type="subunit">
    <text evidence="1">Homodimer and heterodimer: mainly forms homodimers and, to a lesser extent, heterodimers with E2F8. Dimerization is important for DNA-binding. Interacts with HIF1A (By similarity).</text>
</comment>
<comment type="subcellular location">
    <subcellularLocation>
        <location evidence="1">Nucleus</location>
    </subcellularLocation>
</comment>
<comment type="domain">
    <text evidence="1">In contrast to classical members of the E2F transcription factor, atypical members contain 2 DNA-binding domains and regulate transcription in a DP-independent manner. Both DNA-binding domains are required for DNA-binding and are proposed to form an intramolecular structure that is similar to the winged helix structure of the E2F-DP heterodimer (By similarity).</text>
</comment>
<comment type="similarity">
    <text evidence="5">Belongs to the E2F/DP family.</text>
</comment>
<accession>E1BKK0</accession>
<feature type="chain" id="PRO_0000420708" description="Transcription factor E2F8">
    <location>
        <begin position="1"/>
        <end position="866"/>
    </location>
</feature>
<feature type="DNA-binding region" evidence="3">
    <location>
        <begin position="113"/>
        <end position="182"/>
    </location>
</feature>
<feature type="DNA-binding region" evidence="3">
    <location>
        <begin position="261"/>
        <end position="347"/>
    </location>
</feature>
<feature type="region of interest" description="Disordered" evidence="4">
    <location>
        <begin position="409"/>
        <end position="429"/>
    </location>
</feature>
<feature type="region of interest" description="Disordered" evidence="4">
    <location>
        <begin position="532"/>
        <end position="632"/>
    </location>
</feature>
<feature type="region of interest" description="Disordered" evidence="4">
    <location>
        <begin position="794"/>
        <end position="837"/>
    </location>
</feature>
<feature type="compositionally biased region" description="Polar residues" evidence="4">
    <location>
        <begin position="543"/>
        <end position="552"/>
    </location>
</feature>
<feature type="compositionally biased region" description="Basic and acidic residues" evidence="4">
    <location>
        <begin position="588"/>
        <end position="603"/>
    </location>
</feature>
<feature type="compositionally biased region" description="Basic and acidic residues" evidence="4">
    <location>
        <begin position="612"/>
        <end position="624"/>
    </location>
</feature>
<feature type="compositionally biased region" description="Polar residues" evidence="4">
    <location>
        <begin position="794"/>
        <end position="805"/>
    </location>
</feature>
<feature type="compositionally biased region" description="Low complexity" evidence="4">
    <location>
        <begin position="825"/>
        <end position="834"/>
    </location>
</feature>
<feature type="modified residue" description="Phosphoserine" evidence="2">
    <location>
        <position position="71"/>
    </location>
</feature>
<feature type="modified residue" description="Phosphoserine" evidence="2">
    <location>
        <position position="102"/>
    </location>
</feature>
<feature type="modified residue" description="Phosphoserine" evidence="2">
    <location>
        <position position="413"/>
    </location>
</feature>
<feature type="modified residue" description="Phosphoserine" evidence="2">
    <location>
        <position position="417"/>
    </location>
</feature>
<evidence type="ECO:0000250" key="1"/>
<evidence type="ECO:0000250" key="2">
    <source>
        <dbReference type="UniProtKB" id="A0AVK6"/>
    </source>
</evidence>
<evidence type="ECO:0000255" key="3"/>
<evidence type="ECO:0000256" key="4">
    <source>
        <dbReference type="SAM" id="MobiDB-lite"/>
    </source>
</evidence>
<evidence type="ECO:0000305" key="5"/>
<gene>
    <name type="primary">E2F8</name>
</gene>
<protein>
    <recommendedName>
        <fullName>Transcription factor E2F8</fullName>
        <shortName>E2F-8</shortName>
    </recommendedName>
</protein>
<sequence>MENEKENLFFEPHKRGLMKTPLKESTAANIVLADIQPDFGPLTTPTKPKEISQGEPWTPTANLKMLISAVSPEIRNRDQKRGLFDNRNGLSDVKDCLHEHFSGDEYEKSQPSRKEKSLGLLCHKFLARYPNYPNPAVNNDICLDEVAEELNVERRRIYDIVNVLESLHMVSRLAKNRYTWHGRHNLNQILETLKSVGEENKYAEQIMMIKKKEYEQEFEVSKSYNTEDPIIKSNTGQNGHPDMCCAERPGVELRAASVNSRKDKSLKVMSQKFVTLFLVSTPQIVSLEIAAKILTWEDHVEDLDRSKFKTKIRRLYDIANVLSSLDLIKKVHVTEERGRKPAFKWTGPEISPNPSGLSPVLPCAASDLEARQSSKENCAKNLFSTRGKPNFTRHPSLIKLVKSIESDRRKINSAPSSPIKTHKAESTQNSVPFRSKMAQLAAICKMQLEEQSSEPRKNVTVQLAGSGHCKSVAPLDTPANAEPEMMAPSLIQPLGVVPLLPSPLSPAVPVILPQTPSGTSYAIYLQPAQAQTITPPPGLSPTVCPTTSSNAMISEDSTDATGENADSDAPKSSVSTRPGSLLPGPERQGAKNREREPAREKGSKRASMLEDSGSKKKFKEDQKAPENVSTTLFPSGYLIPLTQCSTLGAESILSSNENSGTLSPNHSIYSSPIAGVIPVTSSELTAVNFPSFQVTPLKLMVSPTSMAAVPVGNSPALSSSHPLPIQNPSSAIVNFTLQHLGLISPGVQVSTSPGPGTIAVSPRIEAVSVTPENAGAEQGRATKCDASILSQNQTNGQSFAGTGAQQPVPVTPKGSQPVAESFFRTPGGPTKPTGSPCTDFDGANYTSVGTLLVPQRKLEVSVEDVH</sequence>
<proteinExistence type="inferred from homology"/>
<organism>
    <name type="scientific">Bos taurus</name>
    <name type="common">Bovine</name>
    <dbReference type="NCBI Taxonomy" id="9913"/>
    <lineage>
        <taxon>Eukaryota</taxon>
        <taxon>Metazoa</taxon>
        <taxon>Chordata</taxon>
        <taxon>Craniata</taxon>
        <taxon>Vertebrata</taxon>
        <taxon>Euteleostomi</taxon>
        <taxon>Mammalia</taxon>
        <taxon>Eutheria</taxon>
        <taxon>Laurasiatheria</taxon>
        <taxon>Artiodactyla</taxon>
        <taxon>Ruminantia</taxon>
        <taxon>Pecora</taxon>
        <taxon>Bovidae</taxon>
        <taxon>Bovinae</taxon>
        <taxon>Bos</taxon>
    </lineage>
</organism>
<keyword id="KW-0010">Activator</keyword>
<keyword id="KW-0131">Cell cycle</keyword>
<keyword id="KW-0238">DNA-binding</keyword>
<keyword id="KW-0539">Nucleus</keyword>
<keyword id="KW-0597">Phosphoprotein</keyword>
<keyword id="KW-1185">Reference proteome</keyword>
<keyword id="KW-0678">Repressor</keyword>
<keyword id="KW-0804">Transcription</keyword>
<keyword id="KW-0805">Transcription regulation</keyword>
<reference key="1">
    <citation type="journal article" date="2009" name="Genome Biol.">
        <title>A whole-genome assembly of the domestic cow, Bos taurus.</title>
        <authorList>
            <person name="Zimin A.V."/>
            <person name="Delcher A.L."/>
            <person name="Florea L."/>
            <person name="Kelley D.R."/>
            <person name="Schatz M.C."/>
            <person name="Puiu D."/>
            <person name="Hanrahan F."/>
            <person name="Pertea G."/>
            <person name="Van Tassell C.P."/>
            <person name="Sonstegard T.S."/>
            <person name="Marcais G."/>
            <person name="Roberts M."/>
            <person name="Subramanian P."/>
            <person name="Yorke J.A."/>
            <person name="Salzberg S.L."/>
        </authorList>
    </citation>
    <scope>NUCLEOTIDE SEQUENCE [LARGE SCALE GENOMIC DNA]</scope>
    <source>
        <strain>Hereford</strain>
    </source>
</reference>